<evidence type="ECO:0000255" key="1">
    <source>
        <dbReference type="HAMAP-Rule" id="MF_00339"/>
    </source>
</evidence>
<protein>
    <recommendedName>
        <fullName evidence="1">ATP-dependent 6-phosphofructokinase</fullName>
        <shortName evidence="1">ATP-PFK</shortName>
        <shortName evidence="1">Phosphofructokinase</shortName>
        <ecNumber evidence="1">2.7.1.11</ecNumber>
    </recommendedName>
    <alternativeName>
        <fullName evidence="1">Phosphohexokinase</fullName>
    </alternativeName>
</protein>
<proteinExistence type="inferred from homology"/>
<feature type="chain" id="PRO_0000111958" description="ATP-dependent 6-phosphofructokinase">
    <location>
        <begin position="1"/>
        <end position="340"/>
    </location>
</feature>
<feature type="active site" description="Proton acceptor" evidence="1">
    <location>
        <position position="127"/>
    </location>
</feature>
<feature type="binding site" evidence="1">
    <location>
        <position position="11"/>
    </location>
    <ligand>
        <name>ATP</name>
        <dbReference type="ChEBI" id="CHEBI:30616"/>
    </ligand>
</feature>
<feature type="binding site" evidence="1">
    <location>
        <begin position="21"/>
        <end position="25"/>
    </location>
    <ligand>
        <name>ADP</name>
        <dbReference type="ChEBI" id="CHEBI:456216"/>
        <note>allosteric activator; ligand shared between dimeric partners</note>
    </ligand>
</feature>
<feature type="binding site" evidence="1">
    <location>
        <begin position="72"/>
        <end position="73"/>
    </location>
    <ligand>
        <name>ATP</name>
        <dbReference type="ChEBI" id="CHEBI:30616"/>
    </ligand>
</feature>
<feature type="binding site" evidence="1">
    <location>
        <begin position="102"/>
        <end position="105"/>
    </location>
    <ligand>
        <name>ATP</name>
        <dbReference type="ChEBI" id="CHEBI:30616"/>
    </ligand>
</feature>
<feature type="binding site" evidence="1">
    <location>
        <position position="103"/>
    </location>
    <ligand>
        <name>Mg(2+)</name>
        <dbReference type="ChEBI" id="CHEBI:18420"/>
        <note>catalytic</note>
    </ligand>
</feature>
<feature type="binding site" description="in other chain" evidence="1">
    <location>
        <begin position="125"/>
        <end position="127"/>
    </location>
    <ligand>
        <name>substrate</name>
        <note>ligand shared between dimeric partners</note>
    </ligand>
</feature>
<feature type="binding site" description="in other chain" evidence="1">
    <location>
        <position position="154"/>
    </location>
    <ligand>
        <name>ADP</name>
        <dbReference type="ChEBI" id="CHEBI:456216"/>
        <note>allosteric activator; ligand shared between dimeric partners</note>
    </ligand>
</feature>
<feature type="binding site" evidence="1">
    <location>
        <position position="162"/>
    </location>
    <ligand>
        <name>substrate</name>
        <note>ligand shared between dimeric partners</note>
    </ligand>
</feature>
<feature type="binding site" description="in other chain" evidence="1">
    <location>
        <begin position="169"/>
        <end position="171"/>
    </location>
    <ligand>
        <name>substrate</name>
        <note>ligand shared between dimeric partners</note>
    </ligand>
</feature>
<feature type="binding site" description="in other chain" evidence="1">
    <location>
        <begin position="185"/>
        <end position="187"/>
    </location>
    <ligand>
        <name>ADP</name>
        <dbReference type="ChEBI" id="CHEBI:456216"/>
        <note>allosteric activator; ligand shared between dimeric partners</note>
    </ligand>
</feature>
<feature type="binding site" description="in other chain" evidence="1">
    <location>
        <position position="211"/>
    </location>
    <ligand>
        <name>ADP</name>
        <dbReference type="ChEBI" id="CHEBI:456216"/>
        <note>allosteric activator; ligand shared between dimeric partners</note>
    </ligand>
</feature>
<feature type="binding site" description="in other chain" evidence="1">
    <location>
        <begin position="213"/>
        <end position="215"/>
    </location>
    <ligand>
        <name>ADP</name>
        <dbReference type="ChEBI" id="CHEBI:456216"/>
        <note>allosteric activator; ligand shared between dimeric partners</note>
    </ligand>
</feature>
<feature type="binding site" description="in other chain" evidence="1">
    <location>
        <position position="222"/>
    </location>
    <ligand>
        <name>substrate</name>
        <note>ligand shared between dimeric partners</note>
    </ligand>
</feature>
<feature type="binding site" evidence="1">
    <location>
        <position position="244"/>
    </location>
    <ligand>
        <name>substrate</name>
        <note>ligand shared between dimeric partners</note>
    </ligand>
</feature>
<feature type="binding site" description="in other chain" evidence="1">
    <location>
        <begin position="250"/>
        <end position="253"/>
    </location>
    <ligand>
        <name>substrate</name>
        <note>ligand shared between dimeric partners</note>
    </ligand>
</feature>
<name>PFKA_LACLA</name>
<comment type="function">
    <text evidence="1">Catalyzes the phosphorylation of D-fructose 6-phosphate to fructose 1,6-bisphosphate by ATP, the first committing step of glycolysis.</text>
</comment>
<comment type="catalytic activity">
    <reaction evidence="1">
        <text>beta-D-fructose 6-phosphate + ATP = beta-D-fructose 1,6-bisphosphate + ADP + H(+)</text>
        <dbReference type="Rhea" id="RHEA:16109"/>
        <dbReference type="ChEBI" id="CHEBI:15378"/>
        <dbReference type="ChEBI" id="CHEBI:30616"/>
        <dbReference type="ChEBI" id="CHEBI:32966"/>
        <dbReference type="ChEBI" id="CHEBI:57634"/>
        <dbReference type="ChEBI" id="CHEBI:456216"/>
        <dbReference type="EC" id="2.7.1.11"/>
    </reaction>
</comment>
<comment type="cofactor">
    <cofactor evidence="1">
        <name>Mg(2+)</name>
        <dbReference type="ChEBI" id="CHEBI:18420"/>
    </cofactor>
</comment>
<comment type="activity regulation">
    <text evidence="1">Allosterically activated by ADP and other diphosphonucleosides, and allosterically inhibited by phosphoenolpyruvate.</text>
</comment>
<comment type="pathway">
    <text evidence="1">Carbohydrate degradation; glycolysis; D-glyceraldehyde 3-phosphate and glycerone phosphate from D-glucose: step 3/4.</text>
</comment>
<comment type="subunit">
    <text evidence="1">Homotetramer.</text>
</comment>
<comment type="subcellular location">
    <subcellularLocation>
        <location evidence="1">Cytoplasm</location>
    </subcellularLocation>
</comment>
<comment type="similarity">
    <text evidence="1">Belongs to the phosphofructokinase type A (PFKA) family. ATP-dependent PFK group I subfamily. Prokaryotic clade 'B1' sub-subfamily.</text>
</comment>
<reference key="1">
    <citation type="journal article" date="2001" name="Genome Res.">
        <title>The complete genome sequence of the lactic acid bacterium Lactococcus lactis ssp. lactis IL1403.</title>
        <authorList>
            <person name="Bolotin A."/>
            <person name="Wincker P."/>
            <person name="Mauger S."/>
            <person name="Jaillon O."/>
            <person name="Malarme K."/>
            <person name="Weissenbach J."/>
            <person name="Ehrlich S.D."/>
            <person name="Sorokin A."/>
        </authorList>
    </citation>
    <scope>NUCLEOTIDE SEQUENCE [LARGE SCALE GENOMIC DNA]</scope>
    <source>
        <strain>IL1403</strain>
    </source>
</reference>
<gene>
    <name evidence="1" type="primary">pfkA</name>
    <name type="synonym">pfk</name>
    <name type="ordered locus">LL1333</name>
    <name type="ORF">L0002</name>
</gene>
<sequence length="340" mass="35806">MKRIAVLTSGGDAPGMNAAIRAVVRKAISEGIEVYGINHGYAGMVAGDIFPLTSASVGDKIGRGGTFLYSARYPEFAQVEGQLAGIEQLKKFGIEGVVVIGGDGSYHGAMRLTEHGFPAVGLPGTIDNDIVGTDFTIGFDTAVSTVVDALDKIRDTSSSHNRTFVVEVMGRNAGDIALNAGIAAGADDICIPEKEFKFENVVNNINKGYEKGKNHHIIVLAEGVMTGEEFATKLKEAGYKGDLRVSVLGHIQRGGSPTARDRVLASRMGARAVELLRDGIGGVAVGIRNEELVESPILGTAEEGALFSLTTEGGIKVNNPHKAGLELYRLNSALNNLNLN</sequence>
<accession>P0DOB5</accession>
<accession>Q07636</accession>
<dbReference type="EC" id="2.7.1.11" evidence="1"/>
<dbReference type="EMBL" id="AE005176">
    <property type="protein sequence ID" value="AAK05431.1"/>
    <property type="molecule type" value="Genomic_DNA"/>
</dbReference>
<dbReference type="PIR" id="A40620">
    <property type="entry name" value="JN0614"/>
</dbReference>
<dbReference type="RefSeq" id="NP_267489.1">
    <property type="nucleotide sequence ID" value="NC_002662.1"/>
</dbReference>
<dbReference type="RefSeq" id="WP_003131080.1">
    <property type="nucleotide sequence ID" value="NC_002662.1"/>
</dbReference>
<dbReference type="SMR" id="P0DOB5"/>
<dbReference type="MoonProt" id="P0DOB5"/>
<dbReference type="PaxDb" id="272623-L0002"/>
<dbReference type="EnsemblBacteria" id="AAK05431">
    <property type="protein sequence ID" value="AAK05431"/>
    <property type="gene ID" value="L0002"/>
</dbReference>
<dbReference type="GeneID" id="89633566"/>
<dbReference type="KEGG" id="lla:L0002"/>
<dbReference type="PATRIC" id="fig|272623.7.peg.1440"/>
<dbReference type="eggNOG" id="COG0205">
    <property type="taxonomic scope" value="Bacteria"/>
</dbReference>
<dbReference type="HOGENOM" id="CLU_020655_0_1_9"/>
<dbReference type="OrthoDB" id="9802503at2"/>
<dbReference type="UniPathway" id="UPA00109">
    <property type="reaction ID" value="UER00182"/>
</dbReference>
<dbReference type="Proteomes" id="UP000002196">
    <property type="component" value="Chromosome"/>
</dbReference>
<dbReference type="GO" id="GO:0005945">
    <property type="term" value="C:6-phosphofructokinase complex"/>
    <property type="evidence" value="ECO:0007669"/>
    <property type="project" value="TreeGrafter"/>
</dbReference>
<dbReference type="GO" id="GO:0003872">
    <property type="term" value="F:6-phosphofructokinase activity"/>
    <property type="evidence" value="ECO:0000314"/>
    <property type="project" value="CAFA"/>
</dbReference>
<dbReference type="GO" id="GO:0016208">
    <property type="term" value="F:AMP binding"/>
    <property type="evidence" value="ECO:0007669"/>
    <property type="project" value="TreeGrafter"/>
</dbReference>
<dbReference type="GO" id="GO:0005524">
    <property type="term" value="F:ATP binding"/>
    <property type="evidence" value="ECO:0007669"/>
    <property type="project" value="UniProtKB-KW"/>
</dbReference>
<dbReference type="GO" id="GO:0070095">
    <property type="term" value="F:fructose-6-phosphate binding"/>
    <property type="evidence" value="ECO:0007669"/>
    <property type="project" value="TreeGrafter"/>
</dbReference>
<dbReference type="GO" id="GO:0042802">
    <property type="term" value="F:identical protein binding"/>
    <property type="evidence" value="ECO:0007669"/>
    <property type="project" value="TreeGrafter"/>
</dbReference>
<dbReference type="GO" id="GO:0046872">
    <property type="term" value="F:metal ion binding"/>
    <property type="evidence" value="ECO:0007669"/>
    <property type="project" value="UniProtKB-KW"/>
</dbReference>
<dbReference type="GO" id="GO:0048029">
    <property type="term" value="F:monosaccharide binding"/>
    <property type="evidence" value="ECO:0007669"/>
    <property type="project" value="TreeGrafter"/>
</dbReference>
<dbReference type="GO" id="GO:0061621">
    <property type="term" value="P:canonical glycolysis"/>
    <property type="evidence" value="ECO:0007669"/>
    <property type="project" value="TreeGrafter"/>
</dbReference>
<dbReference type="GO" id="GO:0030388">
    <property type="term" value="P:fructose 1,6-bisphosphate metabolic process"/>
    <property type="evidence" value="ECO:0007669"/>
    <property type="project" value="TreeGrafter"/>
</dbReference>
<dbReference type="GO" id="GO:0006002">
    <property type="term" value="P:fructose 6-phosphate metabolic process"/>
    <property type="evidence" value="ECO:0007669"/>
    <property type="project" value="InterPro"/>
</dbReference>
<dbReference type="CDD" id="cd00763">
    <property type="entry name" value="Bacterial_PFK"/>
    <property type="match status" value="1"/>
</dbReference>
<dbReference type="FunFam" id="3.40.50.450:FF:000001">
    <property type="entry name" value="ATP-dependent 6-phosphofructokinase"/>
    <property type="match status" value="1"/>
</dbReference>
<dbReference type="FunFam" id="3.40.50.460:FF:000002">
    <property type="entry name" value="ATP-dependent 6-phosphofructokinase"/>
    <property type="match status" value="1"/>
</dbReference>
<dbReference type="Gene3D" id="3.40.50.450">
    <property type="match status" value="1"/>
</dbReference>
<dbReference type="Gene3D" id="3.40.50.460">
    <property type="entry name" value="Phosphofructokinase domain"/>
    <property type="match status" value="1"/>
</dbReference>
<dbReference type="HAMAP" id="MF_00339">
    <property type="entry name" value="Phosphofructokinase_I_B1"/>
    <property type="match status" value="1"/>
</dbReference>
<dbReference type="InterPro" id="IPR022953">
    <property type="entry name" value="ATP_PFK"/>
</dbReference>
<dbReference type="InterPro" id="IPR012003">
    <property type="entry name" value="ATP_PFK_prok-type"/>
</dbReference>
<dbReference type="InterPro" id="IPR012828">
    <property type="entry name" value="PFKA_ATP_prok"/>
</dbReference>
<dbReference type="InterPro" id="IPR015912">
    <property type="entry name" value="Phosphofructokinase_CS"/>
</dbReference>
<dbReference type="InterPro" id="IPR000023">
    <property type="entry name" value="Phosphofructokinase_dom"/>
</dbReference>
<dbReference type="InterPro" id="IPR035966">
    <property type="entry name" value="PKF_sf"/>
</dbReference>
<dbReference type="NCBIfam" id="TIGR02482">
    <property type="entry name" value="PFKA_ATP"/>
    <property type="match status" value="1"/>
</dbReference>
<dbReference type="NCBIfam" id="NF002872">
    <property type="entry name" value="PRK03202.1"/>
    <property type="match status" value="1"/>
</dbReference>
<dbReference type="PANTHER" id="PTHR13697:SF4">
    <property type="entry name" value="ATP-DEPENDENT 6-PHOSPHOFRUCTOKINASE"/>
    <property type="match status" value="1"/>
</dbReference>
<dbReference type="PANTHER" id="PTHR13697">
    <property type="entry name" value="PHOSPHOFRUCTOKINASE"/>
    <property type="match status" value="1"/>
</dbReference>
<dbReference type="Pfam" id="PF00365">
    <property type="entry name" value="PFK"/>
    <property type="match status" value="1"/>
</dbReference>
<dbReference type="PIRSF" id="PIRSF000532">
    <property type="entry name" value="ATP_PFK_prok"/>
    <property type="match status" value="1"/>
</dbReference>
<dbReference type="PRINTS" id="PR00476">
    <property type="entry name" value="PHFRCTKINASE"/>
</dbReference>
<dbReference type="SUPFAM" id="SSF53784">
    <property type="entry name" value="Phosphofructokinase"/>
    <property type="match status" value="1"/>
</dbReference>
<dbReference type="PROSITE" id="PS00433">
    <property type="entry name" value="PHOSPHOFRUCTOKINASE"/>
    <property type="match status" value="1"/>
</dbReference>
<organism>
    <name type="scientific">Lactococcus lactis subsp. lactis (strain IL1403)</name>
    <name type="common">Streptococcus lactis</name>
    <dbReference type="NCBI Taxonomy" id="272623"/>
    <lineage>
        <taxon>Bacteria</taxon>
        <taxon>Bacillati</taxon>
        <taxon>Bacillota</taxon>
        <taxon>Bacilli</taxon>
        <taxon>Lactobacillales</taxon>
        <taxon>Streptococcaceae</taxon>
        <taxon>Lactococcus</taxon>
    </lineage>
</organism>
<keyword id="KW-0021">Allosteric enzyme</keyword>
<keyword id="KW-0067">ATP-binding</keyword>
<keyword id="KW-0963">Cytoplasm</keyword>
<keyword id="KW-0324">Glycolysis</keyword>
<keyword id="KW-0418">Kinase</keyword>
<keyword id="KW-0460">Magnesium</keyword>
<keyword id="KW-0479">Metal-binding</keyword>
<keyword id="KW-0547">Nucleotide-binding</keyword>
<keyword id="KW-1185">Reference proteome</keyword>
<keyword id="KW-0808">Transferase</keyword>